<organism>
    <name type="scientific">Salmonella gallinarum (strain 287/91 / NCTC 13346)</name>
    <dbReference type="NCBI Taxonomy" id="550538"/>
    <lineage>
        <taxon>Bacteria</taxon>
        <taxon>Pseudomonadati</taxon>
        <taxon>Pseudomonadota</taxon>
        <taxon>Gammaproteobacteria</taxon>
        <taxon>Enterobacterales</taxon>
        <taxon>Enterobacteriaceae</taxon>
        <taxon>Salmonella</taxon>
    </lineage>
</organism>
<reference key="1">
    <citation type="journal article" date="2008" name="Genome Res.">
        <title>Comparative genome analysis of Salmonella enteritidis PT4 and Salmonella gallinarum 287/91 provides insights into evolutionary and host adaptation pathways.</title>
        <authorList>
            <person name="Thomson N.R."/>
            <person name="Clayton D.J."/>
            <person name="Windhorst D."/>
            <person name="Vernikos G."/>
            <person name="Davidson S."/>
            <person name="Churcher C."/>
            <person name="Quail M.A."/>
            <person name="Stevens M."/>
            <person name="Jones M.A."/>
            <person name="Watson M."/>
            <person name="Barron A."/>
            <person name="Layton A."/>
            <person name="Pickard D."/>
            <person name="Kingsley R.A."/>
            <person name="Bignell A."/>
            <person name="Clark L."/>
            <person name="Harris B."/>
            <person name="Ormond D."/>
            <person name="Abdellah Z."/>
            <person name="Brooks K."/>
            <person name="Cherevach I."/>
            <person name="Chillingworth T."/>
            <person name="Woodward J."/>
            <person name="Norberczak H."/>
            <person name="Lord A."/>
            <person name="Arrowsmith C."/>
            <person name="Jagels K."/>
            <person name="Moule S."/>
            <person name="Mungall K."/>
            <person name="Saunders M."/>
            <person name="Whitehead S."/>
            <person name="Chabalgoity J.A."/>
            <person name="Maskell D."/>
            <person name="Humphreys T."/>
            <person name="Roberts M."/>
            <person name="Barrow P.A."/>
            <person name="Dougan G."/>
            <person name="Parkhill J."/>
        </authorList>
    </citation>
    <scope>NUCLEOTIDE SEQUENCE [LARGE SCALE GENOMIC DNA]</scope>
    <source>
        <strain>287/91 / NCTC 13346</strain>
    </source>
</reference>
<evidence type="ECO:0000255" key="1">
    <source>
        <dbReference type="HAMAP-Rule" id="MF_01559"/>
    </source>
</evidence>
<proteinExistence type="inferred from homology"/>
<name>LLDD_SALG2</name>
<comment type="function">
    <text evidence="1">Catalyzes the conversion of L-lactate to pyruvate. Is coupled to the respiratory chain.</text>
</comment>
<comment type="catalytic activity">
    <reaction evidence="1">
        <text>(S)-lactate + A = pyruvate + AH2</text>
        <dbReference type="Rhea" id="RHEA:45816"/>
        <dbReference type="ChEBI" id="CHEBI:13193"/>
        <dbReference type="ChEBI" id="CHEBI:15361"/>
        <dbReference type="ChEBI" id="CHEBI:16651"/>
        <dbReference type="ChEBI" id="CHEBI:17499"/>
    </reaction>
</comment>
<comment type="cofactor">
    <cofactor evidence="1">
        <name>FMN</name>
        <dbReference type="ChEBI" id="CHEBI:58210"/>
    </cofactor>
</comment>
<comment type="subcellular location">
    <subcellularLocation>
        <location evidence="1">Cell inner membrane</location>
        <topology evidence="1">Peripheral membrane protein</topology>
    </subcellularLocation>
</comment>
<comment type="similarity">
    <text evidence="1">Belongs to the FMN-dependent alpha-hydroxy acid dehydrogenase family.</text>
</comment>
<keyword id="KW-0997">Cell inner membrane</keyword>
<keyword id="KW-1003">Cell membrane</keyword>
<keyword id="KW-0285">Flavoprotein</keyword>
<keyword id="KW-0288">FMN</keyword>
<keyword id="KW-0472">Membrane</keyword>
<keyword id="KW-0560">Oxidoreductase</keyword>
<feature type="chain" id="PRO_0000383441" description="L-lactate dehydrogenase">
    <location>
        <begin position="1"/>
        <end position="396"/>
    </location>
</feature>
<feature type="domain" description="FMN hydroxy acid dehydrogenase" evidence="1">
    <location>
        <begin position="1"/>
        <end position="380"/>
    </location>
</feature>
<feature type="active site" description="Proton acceptor" evidence="1">
    <location>
        <position position="275"/>
    </location>
</feature>
<feature type="binding site" evidence="1">
    <location>
        <position position="24"/>
    </location>
    <ligand>
        <name>substrate</name>
    </ligand>
</feature>
<feature type="binding site" evidence="1">
    <location>
        <position position="106"/>
    </location>
    <ligand>
        <name>FMN</name>
        <dbReference type="ChEBI" id="CHEBI:58210"/>
    </ligand>
</feature>
<feature type="binding site" evidence="1">
    <location>
        <position position="127"/>
    </location>
    <ligand>
        <name>FMN</name>
        <dbReference type="ChEBI" id="CHEBI:58210"/>
    </ligand>
</feature>
<feature type="binding site" evidence="1">
    <location>
        <position position="129"/>
    </location>
    <ligand>
        <name>substrate</name>
    </ligand>
</feature>
<feature type="binding site" evidence="1">
    <location>
        <position position="155"/>
    </location>
    <ligand>
        <name>FMN</name>
        <dbReference type="ChEBI" id="CHEBI:58210"/>
    </ligand>
</feature>
<feature type="binding site" evidence="1">
    <location>
        <position position="164"/>
    </location>
    <ligand>
        <name>substrate</name>
    </ligand>
</feature>
<feature type="binding site" evidence="1">
    <location>
        <position position="251"/>
    </location>
    <ligand>
        <name>FMN</name>
        <dbReference type="ChEBI" id="CHEBI:58210"/>
    </ligand>
</feature>
<feature type="binding site" evidence="1">
    <location>
        <position position="278"/>
    </location>
    <ligand>
        <name>substrate</name>
    </ligand>
</feature>
<feature type="binding site" evidence="1">
    <location>
        <begin position="306"/>
        <end position="330"/>
    </location>
    <ligand>
        <name>FMN</name>
        <dbReference type="ChEBI" id="CHEBI:58210"/>
    </ligand>
</feature>
<dbReference type="EC" id="1.1.-.-" evidence="1"/>
<dbReference type="EMBL" id="AM933173">
    <property type="protein sequence ID" value="CAR39517.1"/>
    <property type="molecule type" value="Genomic_DNA"/>
</dbReference>
<dbReference type="RefSeq" id="WP_000586995.1">
    <property type="nucleotide sequence ID" value="NC_011274.1"/>
</dbReference>
<dbReference type="SMR" id="B5RGI4"/>
<dbReference type="KEGG" id="seg:SG3737"/>
<dbReference type="HOGENOM" id="CLU_020639_0_0_6"/>
<dbReference type="Proteomes" id="UP000008321">
    <property type="component" value="Chromosome"/>
</dbReference>
<dbReference type="GO" id="GO:0005886">
    <property type="term" value="C:plasma membrane"/>
    <property type="evidence" value="ECO:0007669"/>
    <property type="project" value="UniProtKB-SubCell"/>
</dbReference>
<dbReference type="GO" id="GO:0010181">
    <property type="term" value="F:FMN binding"/>
    <property type="evidence" value="ECO:0007669"/>
    <property type="project" value="InterPro"/>
</dbReference>
<dbReference type="GO" id="GO:0004459">
    <property type="term" value="F:L-lactate dehydrogenase activity"/>
    <property type="evidence" value="ECO:0007669"/>
    <property type="project" value="UniProtKB-UniRule"/>
</dbReference>
<dbReference type="GO" id="GO:0009060">
    <property type="term" value="P:aerobic respiration"/>
    <property type="evidence" value="ECO:0007669"/>
    <property type="project" value="TreeGrafter"/>
</dbReference>
<dbReference type="GO" id="GO:0006089">
    <property type="term" value="P:lactate metabolic process"/>
    <property type="evidence" value="ECO:0007669"/>
    <property type="project" value="UniProtKB-UniRule"/>
</dbReference>
<dbReference type="CDD" id="cd02809">
    <property type="entry name" value="alpha_hydroxyacid_oxid_FMN"/>
    <property type="match status" value="1"/>
</dbReference>
<dbReference type="FunFam" id="3.20.20.70:FF:000029">
    <property type="entry name" value="L-lactate dehydrogenase"/>
    <property type="match status" value="1"/>
</dbReference>
<dbReference type="Gene3D" id="3.20.20.70">
    <property type="entry name" value="Aldolase class I"/>
    <property type="match status" value="1"/>
</dbReference>
<dbReference type="HAMAP" id="MF_01559">
    <property type="entry name" value="L_lact_dehydr"/>
    <property type="match status" value="1"/>
</dbReference>
<dbReference type="InterPro" id="IPR013785">
    <property type="entry name" value="Aldolase_TIM"/>
</dbReference>
<dbReference type="InterPro" id="IPR012133">
    <property type="entry name" value="Alpha-hydoxy_acid_DH_FMN"/>
</dbReference>
<dbReference type="InterPro" id="IPR000262">
    <property type="entry name" value="FMN-dep_DH"/>
</dbReference>
<dbReference type="InterPro" id="IPR037396">
    <property type="entry name" value="FMN_HAD"/>
</dbReference>
<dbReference type="InterPro" id="IPR008259">
    <property type="entry name" value="FMN_hydac_DH_AS"/>
</dbReference>
<dbReference type="InterPro" id="IPR020920">
    <property type="entry name" value="LldD"/>
</dbReference>
<dbReference type="NCBIfam" id="NF033901">
    <property type="entry name" value="L_lactate_LldD"/>
    <property type="match status" value="1"/>
</dbReference>
<dbReference type="NCBIfam" id="NF008398">
    <property type="entry name" value="PRK11197.1"/>
    <property type="match status" value="1"/>
</dbReference>
<dbReference type="PANTHER" id="PTHR10578:SF85">
    <property type="entry name" value="L-LACTATE DEHYDROGENASE"/>
    <property type="match status" value="1"/>
</dbReference>
<dbReference type="PANTHER" id="PTHR10578">
    <property type="entry name" value="S -2-HYDROXY-ACID OXIDASE-RELATED"/>
    <property type="match status" value="1"/>
</dbReference>
<dbReference type="Pfam" id="PF01070">
    <property type="entry name" value="FMN_dh"/>
    <property type="match status" value="1"/>
</dbReference>
<dbReference type="PIRSF" id="PIRSF000138">
    <property type="entry name" value="Al-hdrx_acd_dh"/>
    <property type="match status" value="1"/>
</dbReference>
<dbReference type="SUPFAM" id="SSF51395">
    <property type="entry name" value="FMN-linked oxidoreductases"/>
    <property type="match status" value="1"/>
</dbReference>
<dbReference type="PROSITE" id="PS00557">
    <property type="entry name" value="FMN_HYDROXY_ACID_DH_1"/>
    <property type="match status" value="1"/>
</dbReference>
<dbReference type="PROSITE" id="PS51349">
    <property type="entry name" value="FMN_HYDROXY_ACID_DH_2"/>
    <property type="match status" value="1"/>
</dbReference>
<accession>B5RGI4</accession>
<gene>
    <name evidence="1" type="primary">lldD</name>
    <name type="ordered locus">SG3737</name>
</gene>
<sequence>MIISAASDYRAAAQRTLPPFLFHYIDGGAYAEYTLRRNVEDLSQVALRQRVLKNMSDLSLETTLFNETLSMPVALAPVGLCGMYARRGEVQAAAAADAKGIPFTLSTVSVCPIEEVAPTIKRPMWFQLYVLRDRGFMRNALERAKAAGCSTLVFTVDMPTPGARYRDAHSGMSGPNAAMRRYWQAVMHPKWAWDVGLNGRPHDLGNISAYLGKPTGLEDYIGWLANNFDPSISWKDLEWIREFWDGPMVIKGILDPEDARDAVRFGADGIVVSNHGGRQLDGVLSSARALPAIADAVKGDIAILADSGIRNGLDVVRMIALGADTVLLGRAYLYALATAGKAGVANLLDLIEKEMKVAMTLTGAKTISEISGDSLVQELGKSLPAALAPMSKGDTA</sequence>
<protein>
    <recommendedName>
        <fullName evidence="1">L-lactate dehydrogenase</fullName>
        <ecNumber evidence="1">1.1.-.-</ecNumber>
    </recommendedName>
</protein>